<protein>
    <recommendedName>
        <fullName evidence="1">ATP synthase subunit delta</fullName>
    </recommendedName>
    <alternativeName>
        <fullName evidence="1">ATP synthase F(1) sector subunit delta</fullName>
    </alternativeName>
    <alternativeName>
        <fullName evidence="1">F-type ATPase subunit delta</fullName>
        <shortName evidence="1">F-ATPase subunit delta</shortName>
    </alternativeName>
</protein>
<accession>B3PLV5</accession>
<keyword id="KW-0066">ATP synthesis</keyword>
<keyword id="KW-1003">Cell membrane</keyword>
<keyword id="KW-0139">CF(1)</keyword>
<keyword id="KW-0375">Hydrogen ion transport</keyword>
<keyword id="KW-0406">Ion transport</keyword>
<keyword id="KW-0472">Membrane</keyword>
<keyword id="KW-1185">Reference proteome</keyword>
<keyword id="KW-0813">Transport</keyword>
<comment type="function">
    <text evidence="1">F(1)F(0) ATP synthase produces ATP from ADP in the presence of a proton or sodium gradient. F-type ATPases consist of two structural domains, F(1) containing the extramembraneous catalytic core and F(0) containing the membrane proton channel, linked together by a central stalk and a peripheral stalk. During catalysis, ATP synthesis in the catalytic domain of F(1) is coupled via a rotary mechanism of the central stalk subunits to proton translocation.</text>
</comment>
<comment type="function">
    <text evidence="1">This protein is part of the stalk that links CF(0) to CF(1). It either transmits conformational changes from CF(0) to CF(1) or is implicated in proton conduction.</text>
</comment>
<comment type="subunit">
    <text evidence="1">F-type ATPases have 2 components, F(1) - the catalytic core - and F(0) - the membrane proton channel. F(1) has five subunits: alpha(3), beta(3), gamma(1), delta(1), epsilon(1). F(0) has three main subunits: a(1), b(2) and c(10-14). The alpha and beta chains form an alternating ring which encloses part of the gamma chain. F(1) is attached to F(0) by a central stalk formed by the gamma and epsilon chains, while a peripheral stalk is formed by the delta and b chains.</text>
</comment>
<comment type="subcellular location">
    <subcellularLocation>
        <location evidence="1">Cell membrane</location>
        <topology evidence="1">Peripheral membrane protein</topology>
    </subcellularLocation>
</comment>
<comment type="similarity">
    <text evidence="1">Belongs to the ATPase delta chain family.</text>
</comment>
<gene>
    <name evidence="1" type="primary">atpH</name>
    <name type="ordered locus">MARTH_orf044</name>
</gene>
<dbReference type="EMBL" id="CP001047">
    <property type="protein sequence ID" value="ACF07007.1"/>
    <property type="molecule type" value="Genomic_DNA"/>
</dbReference>
<dbReference type="RefSeq" id="WP_012497964.1">
    <property type="nucleotide sequence ID" value="NC_011025.1"/>
</dbReference>
<dbReference type="SMR" id="B3PLV5"/>
<dbReference type="STRING" id="243272.MARTH_orf044"/>
<dbReference type="KEGG" id="mat:MARTH_orf044"/>
<dbReference type="eggNOG" id="COG0712">
    <property type="taxonomic scope" value="Bacteria"/>
</dbReference>
<dbReference type="HOGENOM" id="CLU_085114_4_2_14"/>
<dbReference type="Proteomes" id="UP000008812">
    <property type="component" value="Chromosome"/>
</dbReference>
<dbReference type="GO" id="GO:0005886">
    <property type="term" value="C:plasma membrane"/>
    <property type="evidence" value="ECO:0007669"/>
    <property type="project" value="UniProtKB-SubCell"/>
</dbReference>
<dbReference type="GO" id="GO:0045259">
    <property type="term" value="C:proton-transporting ATP synthase complex"/>
    <property type="evidence" value="ECO:0007669"/>
    <property type="project" value="UniProtKB-KW"/>
</dbReference>
<dbReference type="GO" id="GO:0046933">
    <property type="term" value="F:proton-transporting ATP synthase activity, rotational mechanism"/>
    <property type="evidence" value="ECO:0007669"/>
    <property type="project" value="UniProtKB-UniRule"/>
</dbReference>
<dbReference type="Gene3D" id="1.10.520.20">
    <property type="entry name" value="N-terminal domain of the delta subunit of the F1F0-ATP synthase"/>
    <property type="match status" value="1"/>
</dbReference>
<dbReference type="HAMAP" id="MF_01416">
    <property type="entry name" value="ATP_synth_delta_bact"/>
    <property type="match status" value="1"/>
</dbReference>
<dbReference type="InterPro" id="IPR026015">
    <property type="entry name" value="ATP_synth_OSCP/delta_N_sf"/>
</dbReference>
<dbReference type="InterPro" id="IPR000711">
    <property type="entry name" value="ATPase_OSCP/dsu"/>
</dbReference>
<dbReference type="NCBIfam" id="TIGR01145">
    <property type="entry name" value="ATP_synt_delta"/>
    <property type="match status" value="1"/>
</dbReference>
<dbReference type="NCBIfam" id="NF009975">
    <property type="entry name" value="PRK13436.1"/>
    <property type="match status" value="1"/>
</dbReference>
<dbReference type="PANTHER" id="PTHR11910">
    <property type="entry name" value="ATP SYNTHASE DELTA CHAIN"/>
    <property type="match status" value="1"/>
</dbReference>
<dbReference type="Pfam" id="PF00213">
    <property type="entry name" value="OSCP"/>
    <property type="match status" value="1"/>
</dbReference>
<dbReference type="PRINTS" id="PR00125">
    <property type="entry name" value="ATPASEDELTA"/>
</dbReference>
<dbReference type="SUPFAM" id="SSF47928">
    <property type="entry name" value="N-terminal domain of the delta subunit of the F1F0-ATP synthase"/>
    <property type="match status" value="1"/>
</dbReference>
<reference key="1">
    <citation type="journal article" date="2008" name="Infect. Immun.">
        <title>Genome of Mycoplasma arthritidis.</title>
        <authorList>
            <person name="Dybvig K."/>
            <person name="Zuhua C."/>
            <person name="Lao P."/>
            <person name="Jordan D.S."/>
            <person name="French C.T."/>
            <person name="Tu A.H."/>
            <person name="Loraine A.E."/>
        </authorList>
    </citation>
    <scope>NUCLEOTIDE SEQUENCE [LARGE SCALE GENOMIC DNA]</scope>
    <source>
        <strain>158L3-1</strain>
    </source>
</reference>
<proteinExistence type="inferred from homology"/>
<organism>
    <name type="scientific">Metamycoplasma arthritidis (strain 158L3-1)</name>
    <name type="common">Mycoplasma arthritidis</name>
    <dbReference type="NCBI Taxonomy" id="243272"/>
    <lineage>
        <taxon>Bacteria</taxon>
        <taxon>Bacillati</taxon>
        <taxon>Mycoplasmatota</taxon>
        <taxon>Mycoplasmoidales</taxon>
        <taxon>Metamycoplasmataceae</taxon>
        <taxon>Metamycoplasma</taxon>
    </lineage>
</organism>
<name>ATPD_META1</name>
<sequence>MYNINDLIYNWSFALFDLANDEGILKELTADVVKVIKVLKRNKRYLEILNSYNVDLDVKFQKIDEAFSGNNIHLINFIKLAAKAAVAKFLIQILVRFVEISNQKLNVKYGTIFTTIALDEVKVKEFESKISKKLNAKVILKNEIDPSLIAGIKIKIDDYVVENSISGYLNELKKSVIKK</sequence>
<feature type="chain" id="PRO_0000382123" description="ATP synthase subunit delta">
    <location>
        <begin position="1"/>
        <end position="179"/>
    </location>
</feature>
<evidence type="ECO:0000255" key="1">
    <source>
        <dbReference type="HAMAP-Rule" id="MF_01416"/>
    </source>
</evidence>